<feature type="chain" id="PRO_0000205748" description="Pre-mRNA-splicing factor clf-1">
    <location>
        <begin position="1"/>
        <end position="695"/>
    </location>
</feature>
<feature type="repeat" description="HAT 1">
    <location>
        <begin position="52"/>
        <end position="84"/>
    </location>
</feature>
<feature type="repeat" description="HAT 2">
    <location>
        <begin position="86"/>
        <end position="118"/>
    </location>
</feature>
<feature type="repeat" description="HAT 3">
    <location>
        <begin position="120"/>
        <end position="152"/>
    </location>
</feature>
<feature type="repeat" description="HAT 4">
    <location>
        <begin position="154"/>
        <end position="185"/>
    </location>
</feature>
<feature type="repeat" description="HAT 5">
    <location>
        <begin position="187"/>
        <end position="218"/>
    </location>
</feature>
<feature type="repeat" description="HAT 6">
    <location>
        <begin position="220"/>
        <end position="259"/>
    </location>
</feature>
<feature type="repeat" description="HAT 7">
    <location>
        <begin position="261"/>
        <end position="295"/>
    </location>
</feature>
<feature type="repeat" description="HAT 8">
    <location>
        <begin position="305"/>
        <end position="337"/>
    </location>
</feature>
<feature type="repeat" description="HAT 9">
    <location>
        <begin position="339"/>
        <end position="373"/>
    </location>
</feature>
<feature type="repeat" description="HAT 10">
    <location>
        <begin position="383"/>
        <end position="419"/>
    </location>
</feature>
<feature type="repeat" description="HAT 11">
    <location>
        <begin position="421"/>
        <end position="452"/>
    </location>
</feature>
<feature type="repeat" description="HAT 12">
    <location>
        <begin position="454"/>
        <end position="486"/>
    </location>
</feature>
<feature type="repeat" description="HAT 13">
    <location>
        <begin position="488"/>
        <end position="522"/>
    </location>
</feature>
<feature type="repeat" description="HAT 14">
    <location>
        <begin position="524"/>
        <end position="555"/>
    </location>
</feature>
<feature type="repeat" description="HAT 15">
    <location>
        <begin position="578"/>
        <end position="616"/>
    </location>
</feature>
<feature type="repeat" description="HAT 16">
    <location>
        <begin position="621"/>
        <end position="654"/>
    </location>
</feature>
<accession>Q7SGD2</accession>
<reference key="1">
    <citation type="journal article" date="2003" name="Nature">
        <title>The genome sequence of the filamentous fungus Neurospora crassa.</title>
        <authorList>
            <person name="Galagan J.E."/>
            <person name="Calvo S.E."/>
            <person name="Borkovich K.A."/>
            <person name="Selker E.U."/>
            <person name="Read N.D."/>
            <person name="Jaffe D.B."/>
            <person name="FitzHugh W."/>
            <person name="Ma L.-J."/>
            <person name="Smirnov S."/>
            <person name="Purcell S."/>
            <person name="Rehman B."/>
            <person name="Elkins T."/>
            <person name="Engels R."/>
            <person name="Wang S."/>
            <person name="Nielsen C.B."/>
            <person name="Butler J."/>
            <person name="Endrizzi M."/>
            <person name="Qui D."/>
            <person name="Ianakiev P."/>
            <person name="Bell-Pedersen D."/>
            <person name="Nelson M.A."/>
            <person name="Werner-Washburne M."/>
            <person name="Selitrennikoff C.P."/>
            <person name="Kinsey J.A."/>
            <person name="Braun E.L."/>
            <person name="Zelter A."/>
            <person name="Schulte U."/>
            <person name="Kothe G.O."/>
            <person name="Jedd G."/>
            <person name="Mewes H.-W."/>
            <person name="Staben C."/>
            <person name="Marcotte E."/>
            <person name="Greenberg D."/>
            <person name="Roy A."/>
            <person name="Foley K."/>
            <person name="Naylor J."/>
            <person name="Stange-Thomann N."/>
            <person name="Barrett R."/>
            <person name="Gnerre S."/>
            <person name="Kamal M."/>
            <person name="Kamvysselis M."/>
            <person name="Mauceli E.W."/>
            <person name="Bielke C."/>
            <person name="Rudd S."/>
            <person name="Frishman D."/>
            <person name="Krystofova S."/>
            <person name="Rasmussen C."/>
            <person name="Metzenberg R.L."/>
            <person name="Perkins D.D."/>
            <person name="Kroken S."/>
            <person name="Cogoni C."/>
            <person name="Macino G."/>
            <person name="Catcheside D.E.A."/>
            <person name="Li W."/>
            <person name="Pratt R.J."/>
            <person name="Osmani S.A."/>
            <person name="DeSouza C.P.C."/>
            <person name="Glass N.L."/>
            <person name="Orbach M.J."/>
            <person name="Berglund J.A."/>
            <person name="Voelker R."/>
            <person name="Yarden O."/>
            <person name="Plamann M."/>
            <person name="Seiler S."/>
            <person name="Dunlap J.C."/>
            <person name="Radford A."/>
            <person name="Aramayo R."/>
            <person name="Natvig D.O."/>
            <person name="Alex L.A."/>
            <person name="Mannhaupt G."/>
            <person name="Ebbole D.J."/>
            <person name="Freitag M."/>
            <person name="Paulsen I."/>
            <person name="Sachs M.S."/>
            <person name="Lander E.S."/>
            <person name="Nusbaum C."/>
            <person name="Birren B.W."/>
        </authorList>
    </citation>
    <scope>NUCLEOTIDE SEQUENCE [LARGE SCALE GENOMIC DNA]</scope>
    <source>
        <strain>ATCC 24698 / 74-OR23-1A / CBS 708.71 / DSM 1257 / FGSC 987</strain>
    </source>
</reference>
<sequence length="695" mass="82733">MESSRGPPRVKNKAPAPVQISAEQLLREAVDRQEVNLQTPTQRFADLEELKEYQGRKRKEFEDYVRRNRVRLSNWLQYAQWELEQKEFARARSVFERALDVHPNNTQLWIRYVQAEIKNRNINHARNLLDRAVTRLPRVTSLWYQYLYVMEMLGDIPGTRQVFDRWMKWQPDEQAWSAYIRLEKRYGEFDRAREIFRAFTAVHPEPRTWLKWAKFEEEYGTSDTVREVFQTAIQTIAETLGDDAVDERIFIAFARYEARLREYERARAIYKFGLDNLPRSKSMTLHAHYTTFEKQFGDKEGVEDVILTKRRRLYEEQVKENAKNYDVWFDFARLEESGGDVDRTREVYERAIAQVPPTQEKRHWRRYIFLFLFYAIWEERETKDIGRARQIYDTCLNLIPHKKFTFAKVWVAKAHFEIRQGQLTTARKTLGRAIGMCPKDKIFKEYILLEQKLYEFERCRTLYEKHVMYNPANCQTWIKWAELERGLDDLERTRAIFELAVSQPILDMPEVVWKAYIDFEEEEGEYERTRALYERLLEKADHPKVWISYAQFEINIPDEAEEEEETEEEVEEKPVSEEAKARARKIFERAHKSMKERELKAERVSLLNAWLAFEKTHGSAEDIEKIQKQMPRKTKKKRKLEDDTWEEYVDYIFPADDQQTKNLSSLLAMANAWKQQAAGGAGGAAVDEAAQGGSS</sequence>
<organism>
    <name type="scientific">Neurospora crassa (strain ATCC 24698 / 74-OR23-1A / CBS 708.71 / DSM 1257 / FGSC 987)</name>
    <dbReference type="NCBI Taxonomy" id="367110"/>
    <lineage>
        <taxon>Eukaryota</taxon>
        <taxon>Fungi</taxon>
        <taxon>Dikarya</taxon>
        <taxon>Ascomycota</taxon>
        <taxon>Pezizomycotina</taxon>
        <taxon>Sordariomycetes</taxon>
        <taxon>Sordariomycetidae</taxon>
        <taxon>Sordariales</taxon>
        <taxon>Sordariaceae</taxon>
        <taxon>Neurospora</taxon>
    </lineage>
</organism>
<gene>
    <name type="primary">clf-1</name>
    <name type="ORF">NCU02717</name>
</gene>
<dbReference type="EMBL" id="CM002236">
    <property type="protein sequence ID" value="EAA35866.1"/>
    <property type="molecule type" value="Genomic_DNA"/>
</dbReference>
<dbReference type="RefSeq" id="XP_965102.1">
    <property type="nucleotide sequence ID" value="XM_960009.2"/>
</dbReference>
<dbReference type="SMR" id="Q7SGD2"/>
<dbReference type="FunCoup" id="Q7SGD2">
    <property type="interactions" value="1021"/>
</dbReference>
<dbReference type="STRING" id="367110.Q7SGD2"/>
<dbReference type="PaxDb" id="5141-EFNCRP00000002061"/>
<dbReference type="EnsemblFungi" id="EAA35866">
    <property type="protein sequence ID" value="EAA35866"/>
    <property type="gene ID" value="NCU02717"/>
</dbReference>
<dbReference type="GeneID" id="3881267"/>
<dbReference type="KEGG" id="ncr:NCU02717"/>
<dbReference type="VEuPathDB" id="FungiDB:NCU02717"/>
<dbReference type="HOGENOM" id="CLU_011554_1_0_1"/>
<dbReference type="InParanoid" id="Q7SGD2"/>
<dbReference type="OrthoDB" id="541719at2759"/>
<dbReference type="Proteomes" id="UP000001805">
    <property type="component" value="Chromosome 1, Linkage Group I"/>
</dbReference>
<dbReference type="GO" id="GO:0071014">
    <property type="term" value="C:post-mRNA release spliceosomal complex"/>
    <property type="evidence" value="ECO:0000318"/>
    <property type="project" value="GO_Central"/>
</dbReference>
<dbReference type="GO" id="GO:0000974">
    <property type="term" value="C:Prp19 complex"/>
    <property type="evidence" value="ECO:0000318"/>
    <property type="project" value="GO_Central"/>
</dbReference>
<dbReference type="GO" id="GO:0071007">
    <property type="term" value="C:U2-type catalytic step 2 spliceosome"/>
    <property type="evidence" value="ECO:0000318"/>
    <property type="project" value="GO_Central"/>
</dbReference>
<dbReference type="GO" id="GO:0000398">
    <property type="term" value="P:mRNA splicing, via spliceosome"/>
    <property type="evidence" value="ECO:0000318"/>
    <property type="project" value="GO_Central"/>
</dbReference>
<dbReference type="GO" id="GO:0000245">
    <property type="term" value="P:spliceosomal complex assembly"/>
    <property type="evidence" value="ECO:0000318"/>
    <property type="project" value="GO_Central"/>
</dbReference>
<dbReference type="FunFam" id="1.25.40.10:FF:000048">
    <property type="entry name" value="Cell cycle control protein"/>
    <property type="match status" value="1"/>
</dbReference>
<dbReference type="FunFam" id="1.25.40.10:FF:000306">
    <property type="entry name" value="Cell cycle control protein cwf4"/>
    <property type="match status" value="1"/>
</dbReference>
<dbReference type="FunFam" id="1.25.40.10:FF:000269">
    <property type="entry name" value="Crooked neck pre-mRNA-splicing factor 1"/>
    <property type="match status" value="1"/>
</dbReference>
<dbReference type="Gene3D" id="1.25.40.10">
    <property type="entry name" value="Tetratricopeptide repeat domain"/>
    <property type="match status" value="4"/>
</dbReference>
<dbReference type="InterPro" id="IPR003107">
    <property type="entry name" value="HAT"/>
</dbReference>
<dbReference type="InterPro" id="IPR055433">
    <property type="entry name" value="HAT_Syf1-like_N"/>
</dbReference>
<dbReference type="InterPro" id="IPR055430">
    <property type="entry name" value="HAT_Syf1_CNRKL1_C"/>
</dbReference>
<dbReference type="InterPro" id="IPR045075">
    <property type="entry name" value="Syf1-like"/>
</dbReference>
<dbReference type="InterPro" id="IPR011990">
    <property type="entry name" value="TPR-like_helical_dom_sf"/>
</dbReference>
<dbReference type="InterPro" id="IPR019734">
    <property type="entry name" value="TPR_rpt"/>
</dbReference>
<dbReference type="PANTHER" id="PTHR11246:SF3">
    <property type="entry name" value="CROOKED NECK-LIKE PROTEIN 1"/>
    <property type="match status" value="1"/>
</dbReference>
<dbReference type="PANTHER" id="PTHR11246">
    <property type="entry name" value="PRE-MRNA SPLICING FACTOR"/>
    <property type="match status" value="1"/>
</dbReference>
<dbReference type="Pfam" id="PF23241">
    <property type="entry name" value="HAT_PRP39_C"/>
    <property type="match status" value="1"/>
</dbReference>
<dbReference type="Pfam" id="PF23231">
    <property type="entry name" value="HAT_Syf1_CNRKL1_C"/>
    <property type="match status" value="1"/>
</dbReference>
<dbReference type="Pfam" id="PF23233">
    <property type="entry name" value="HAT_Syf1_CNRKL1_N"/>
    <property type="match status" value="2"/>
</dbReference>
<dbReference type="SMART" id="SM00386">
    <property type="entry name" value="HAT"/>
    <property type="match status" value="15"/>
</dbReference>
<dbReference type="SUPFAM" id="SSF48452">
    <property type="entry name" value="TPR-like"/>
    <property type="match status" value="2"/>
</dbReference>
<keyword id="KW-0507">mRNA processing</keyword>
<keyword id="KW-0508">mRNA splicing</keyword>
<keyword id="KW-0539">Nucleus</keyword>
<keyword id="KW-1185">Reference proteome</keyword>
<keyword id="KW-0677">Repeat</keyword>
<keyword id="KW-0747">Spliceosome</keyword>
<evidence type="ECO:0000250" key="1"/>
<evidence type="ECO:0000305" key="2"/>
<proteinExistence type="inferred from homology"/>
<name>CLF1_NEUCR</name>
<comment type="function">
    <text evidence="1">Involved in pre-mRNA splicing and cell cycle progression. Required for the spliceosome assembly and initiation of the DNA replication (By similarity).</text>
</comment>
<comment type="subunit">
    <text evidence="1">Associated with the spliceosome.</text>
</comment>
<comment type="subcellular location">
    <subcellularLocation>
        <location evidence="1">Nucleus</location>
    </subcellularLocation>
</comment>
<comment type="similarity">
    <text evidence="2">Belongs to the crooked-neck family.</text>
</comment>
<protein>
    <recommendedName>
        <fullName>Pre-mRNA-splicing factor clf-1</fullName>
    </recommendedName>
</protein>